<feature type="chain" id="PRO_0000084423" description="Protein lin-10">
    <location>
        <begin position="1"/>
        <end position="982"/>
    </location>
</feature>
<feature type="domain" description="PID" evidence="2">
    <location>
        <begin position="604"/>
        <end position="788"/>
    </location>
</feature>
<feature type="domain" description="PDZ 1" evidence="1">
    <location>
        <begin position="801"/>
        <end position="886"/>
    </location>
</feature>
<feature type="domain" description="PDZ 2" evidence="1">
    <location>
        <begin position="892"/>
        <end position="968"/>
    </location>
</feature>
<feature type="region of interest" description="Disordered" evidence="3">
    <location>
        <begin position="1"/>
        <end position="55"/>
    </location>
</feature>
<feature type="region of interest" description="Disordered" evidence="3">
    <location>
        <begin position="119"/>
        <end position="228"/>
    </location>
</feature>
<feature type="region of interest" description="Disordered" evidence="3">
    <location>
        <begin position="269"/>
        <end position="327"/>
    </location>
</feature>
<feature type="region of interest" description="Disordered" evidence="3">
    <location>
        <begin position="432"/>
        <end position="511"/>
    </location>
</feature>
<feature type="region of interest" description="Disordered" evidence="3">
    <location>
        <begin position="525"/>
        <end position="593"/>
    </location>
</feature>
<feature type="compositionally biased region" description="Polar residues" evidence="3">
    <location>
        <begin position="1"/>
        <end position="16"/>
    </location>
</feature>
<feature type="compositionally biased region" description="Gly residues" evidence="3">
    <location>
        <begin position="33"/>
        <end position="44"/>
    </location>
</feature>
<feature type="compositionally biased region" description="Low complexity" evidence="3">
    <location>
        <begin position="119"/>
        <end position="134"/>
    </location>
</feature>
<feature type="compositionally biased region" description="Polar residues" evidence="3">
    <location>
        <begin position="143"/>
        <end position="156"/>
    </location>
</feature>
<feature type="compositionally biased region" description="Polar residues" evidence="3">
    <location>
        <begin position="169"/>
        <end position="190"/>
    </location>
</feature>
<feature type="compositionally biased region" description="Basic and acidic residues" evidence="3">
    <location>
        <begin position="211"/>
        <end position="228"/>
    </location>
</feature>
<feature type="compositionally biased region" description="Polar residues" evidence="3">
    <location>
        <begin position="301"/>
        <end position="318"/>
    </location>
</feature>
<feature type="compositionally biased region" description="Low complexity" evidence="3">
    <location>
        <begin position="432"/>
        <end position="445"/>
    </location>
</feature>
<feature type="compositionally biased region" description="Low complexity" evidence="3">
    <location>
        <begin position="454"/>
        <end position="464"/>
    </location>
</feature>
<feature type="compositionally biased region" description="Polar residues" evidence="3">
    <location>
        <begin position="490"/>
        <end position="501"/>
    </location>
</feature>
<feature type="compositionally biased region" description="Low complexity" evidence="3">
    <location>
        <begin position="539"/>
        <end position="550"/>
    </location>
</feature>
<feature type="compositionally biased region" description="Basic and acidic residues" evidence="3">
    <location>
        <begin position="577"/>
        <end position="593"/>
    </location>
</feature>
<feature type="splice variant" id="VSP_004305" description="In isoform b." evidence="9">
    <location>
        <begin position="253"/>
        <end position="280"/>
    </location>
</feature>
<feature type="mutagenesis site" description="Loss of cdk-5-mediated regulation of synaptic localization; when associated with A-26; A-28; A-87; A-155; A-201; A-358; A-424; A-444 and A-448." evidence="5 8">
    <original>S</original>
    <variation>A</variation>
    <location>
        <position position="15"/>
    </location>
</feature>
<feature type="mutagenesis site" description="Abnormal endosomal localization upon hypoxia treatment; when associated with A-27; A-29; A-88; A-156; A-202; A-359; A-425; A-445 and A-449." evidence="8">
    <original>P</original>
    <variation>A</variation>
    <location>
        <position position="16"/>
    </location>
</feature>
<feature type="mutagenesis site" description="Loss of cdk-5-mediated regulation of synaptic localization; when associated with A-15; A28; A-87; A-155; A-201; A-358; A-424; A-444 and A-448." evidence="5 8">
    <original>T</original>
    <variation>A</variation>
    <location>
        <position position="26"/>
    </location>
</feature>
<feature type="mutagenesis site" description="Abnormal endosomal localization upon hypoxia treatment; when associated with A-16; A-29; A-88; A-156; A-202; A-359; A-425; A-445 and A-449." evidence="8">
    <original>P</original>
    <variation>A</variation>
    <location>
        <position position="27"/>
    </location>
</feature>
<feature type="mutagenesis site" description="Loss of cdk-5-mediated regulation of synaptic localization; when associated with A-15; A26; A-87; A-155; A-201; A-358; A-424; A-444 and A-448." evidence="5 8">
    <original>T</original>
    <variation>A</variation>
    <location>
        <position position="28"/>
    </location>
</feature>
<feature type="mutagenesis site" description="Abnormal endosomal localization upon hypoxia treatment; when associated with A-16; A-27; A-88; A-156; A-202; A-359; A-425; A-445 and A-449." evidence="8">
    <original>P</original>
    <variation>A</variation>
    <location>
        <position position="29"/>
    </location>
</feature>
<feature type="mutagenesis site" description="Loss of cdk-5-mediated regulation of synaptic expression; when associated with A-15; A-26; A28; A-155; A-201; A-358; A-424; A-444 and A-448." evidence="5 8">
    <original>S</original>
    <variation>A</variation>
    <location>
        <position position="87"/>
    </location>
</feature>
<feature type="mutagenesis site" description="Abnormal endosomal localization upon hypoxia treatment; when associated with A-16; A-27; A-29; A-156; A-202; A-359; A-425; A-445 and A-449." evidence="8">
    <original>P</original>
    <variation>A</variation>
    <location>
        <position position="88"/>
    </location>
</feature>
<feature type="mutagenesis site" description="Loss of cdk-5-mediated regulation of synaptic localization; when associated with A-15; A-26; A28; A-87; A-201; A-358; A-424; A-444 and A-448." evidence="5 8">
    <original>S</original>
    <variation>A</variation>
    <location>
        <position position="155"/>
    </location>
</feature>
<feature type="mutagenesis site" description="Abnormal endosomal localization upon hypoxia treatment; when associated with A-16; A-27; A-29; A-88; A-202; A-359; A-425; A-445 and A-449." evidence="8">
    <original>P</original>
    <variation>A</variation>
    <location>
        <position position="156"/>
    </location>
</feature>
<feature type="mutagenesis site" description="Loss of cdk-5-mediated regulation of synaptic localization; when associated with A-15; A-26; A28; A-87; A-155; A-358; A-424; A-444 and A-448." evidence="5 8">
    <original>S</original>
    <variation>A</variation>
    <location>
        <position position="201"/>
    </location>
</feature>
<feature type="mutagenesis site" description="Abnormal endosomal localization upon hypoxia treatment; when associated with A-16; A-27; A-29; A-88; A-156; A-359; A-425; A-445 and A-449." evidence="8">
    <original>P</original>
    <variation>A</variation>
    <location>
        <position position="202"/>
    </location>
</feature>
<feature type="mutagenesis site" description="Loss of cdk-5-mediated regulation of synaptic localization; when associated with A-15; A-26; A28; A-87; A-155; A-201; A-424; A-444 and A-448." evidence="5 8">
    <original>T</original>
    <variation>A</variation>
    <location>
        <position position="358"/>
    </location>
</feature>
<feature type="mutagenesis site" description="Abnormal endosomal localization upon hypoxia treatment; when associated with A-16; A-27; A-29; A-88; A-156; A-202; A-425; A-445 and A-449." evidence="8">
    <original>P</original>
    <variation>A</variation>
    <location>
        <position position="359"/>
    </location>
</feature>
<feature type="mutagenesis site" description="Loss of cdk-5-mediated regulation of synaptic localization; when associated with A-15; A-26; A28; A-87; A-155; A-201; A-358; A-444 and A-448." evidence="5 8">
    <original>T</original>
    <variation>A</variation>
    <location>
        <position position="424"/>
    </location>
</feature>
<feature type="mutagenesis site" description="Abnormal endosomal localization upon hypoxia treatment; when associated with A-16; A-27; A-29; A-88; A-156; A-202; A-359; A-445 and A-449." evidence="8">
    <original>P</original>
    <variation>A</variation>
    <location>
        <position position="425"/>
    </location>
</feature>
<feature type="mutagenesis site" description="Loss of cdk-5-mediated regulation of synaptic localization; when associated with A-15; A-26; A28; A-87; A-155; A-201; A-358; A-424 and A-448." evidence="5 8">
    <original>T</original>
    <variation>A</variation>
    <location>
        <position position="444"/>
    </location>
</feature>
<feature type="mutagenesis site" description="Abnormal endosomal localization upon hypoxia treatment; when associated with A-16; A-27; A-29; A-88; A-156; A-202; A-359; A-425 and A-449." evidence="8">
    <original>P</original>
    <variation>A</variation>
    <location>
        <position position="445"/>
    </location>
</feature>
<feature type="mutagenesis site" description="Loss of cdk-5-mediated regulation of synaptic localization; when associated with A-15; A-26; A28; A-87; A-155; A-201; A-358; A-424 and A-444." evidence="5 8">
    <original>S</original>
    <variation>A</variation>
    <location>
        <position position="448"/>
    </location>
</feature>
<feature type="mutagenesis site" description="Abnormal endosomal localization upon hypoxia treatment; when associated with A-16; A-27; A-29; A-88; A-156; A-202; A-359; A-425 and A-445." evidence="8">
    <original>P</original>
    <variation>A</variation>
    <location>
        <position position="449"/>
    </location>
</feature>
<evidence type="ECO:0000255" key="1">
    <source>
        <dbReference type="PROSITE-ProRule" id="PRU00143"/>
    </source>
</evidence>
<evidence type="ECO:0000255" key="2">
    <source>
        <dbReference type="PROSITE-ProRule" id="PRU00148"/>
    </source>
</evidence>
<evidence type="ECO:0000256" key="3">
    <source>
        <dbReference type="SAM" id="MobiDB-lite"/>
    </source>
</evidence>
<evidence type="ECO:0000269" key="4">
    <source>
    </source>
</evidence>
<evidence type="ECO:0000269" key="5">
    <source>
    </source>
</evidence>
<evidence type="ECO:0000269" key="6">
    <source>
    </source>
</evidence>
<evidence type="ECO:0000269" key="7">
    <source>
    </source>
</evidence>
<evidence type="ECO:0000269" key="8">
    <source>
    </source>
</evidence>
<evidence type="ECO:0000303" key="9">
    <source>
    </source>
</evidence>
<evidence type="ECO:0000312" key="10">
    <source>
        <dbReference type="WormBase" id="C09H6.2a"/>
    </source>
</evidence>
<evidence type="ECO:0000312" key="11">
    <source>
        <dbReference type="WormBase" id="C09H6.2b"/>
    </source>
</evidence>
<keyword id="KW-0025">Alternative splicing</keyword>
<keyword id="KW-0963">Cytoplasm</keyword>
<keyword id="KW-0217">Developmental protein</keyword>
<keyword id="KW-0333">Golgi apparatus</keyword>
<keyword id="KW-0379">Hydroxylation</keyword>
<keyword id="KW-0472">Membrane</keyword>
<keyword id="KW-0524">Neurogenesis</keyword>
<keyword id="KW-0597">Phosphoprotein</keyword>
<keyword id="KW-1185">Reference proteome</keyword>
<keyword id="KW-0677">Repeat</keyword>
<keyword id="KW-0770">Synapse</keyword>
<keyword id="KW-0813">Transport</keyword>
<proteinExistence type="evidence at protein level"/>
<reference key="1">
    <citation type="journal article" date="1999" name="Mol. Biol. Cell">
        <title>Basolateral localization of the Caenorhabditis elegans epidermal growth factor receptor in epithelial cells by the PDZ protein lin-10.</title>
        <authorList>
            <person name="Whitfield C.W."/>
            <person name="Benard C."/>
            <person name="Barnes T."/>
            <person name="Hekimi S."/>
            <person name="Kim S.K."/>
        </authorList>
    </citation>
    <scope>NUCLEOTIDE SEQUENCE [MRNA] (ISOFORM B)</scope>
    <scope>FUNCTION</scope>
    <scope>SUBCELLULAR LOCATION</scope>
    <scope>TISSUE SPECIFICITY</scope>
    <source>
        <strain>Bristol N2</strain>
    </source>
</reference>
<reference key="2">
    <citation type="journal article" date="1998" name="Science">
        <title>Genome sequence of the nematode C. elegans: a platform for investigating biology.</title>
        <authorList>
            <consortium name="The C. elegans sequencing consortium"/>
        </authorList>
    </citation>
    <scope>NUCLEOTIDE SEQUENCE [LARGE SCALE GENOMIC DNA]</scope>
    <source>
        <strain>Bristol N2</strain>
    </source>
</reference>
<reference key="3">
    <citation type="journal article" date="1990" name="Genes Dev.">
        <title>The Caenorhabditis elegans gene lin-10 is broadly expressed while required specifically for the determination of vulval cell fates.</title>
        <authorList>
            <person name="Kim S.K."/>
            <person name="Horvitz H.R."/>
        </authorList>
    </citation>
    <scope>FUNCTION</scope>
    <source>
        <strain>Bristol N2</strain>
    </source>
</reference>
<reference key="4">
    <citation type="journal article" date="2007" name="Mol. Biol. Cell">
        <title>CDK-5 regulates the abundance of GLR-1 glutamate receptors in the ventral cord of Caenorhabditis elegans.</title>
        <authorList>
            <person name="Juo P."/>
            <person name="Harbaugh T."/>
            <person name="Garriga G."/>
            <person name="Kaplan J.M."/>
        </authorList>
    </citation>
    <scope>FUNCTION</scope>
    <scope>SUBCELLULAR LOCATION</scope>
    <scope>PHOSPHORYLATION</scope>
    <scope>MUTAGENESIS OF SER-15; THR-26; THR-28; SER-87; SER-155; SER-201; THR-358; THR-424; THR-444 AND SER-448</scope>
</reference>
<reference key="5">
    <citation type="journal article" date="2012" name="EMBO J.">
        <title>Hypoxia regulates glutamate receptor trafficking through an HIF-independent mechanism.</title>
        <authorList>
            <person name="Park E.C."/>
            <person name="Ghose P."/>
            <person name="Shao Z."/>
            <person name="Ye Q."/>
            <person name="Kang L."/>
            <person name="Xu X.Z."/>
            <person name="Powell-Coffman J.A."/>
            <person name="Rongo C."/>
        </authorList>
    </citation>
    <scope>FUNCTION</scope>
    <scope>INTERACTION WITH EGL-9</scope>
    <scope>SUBCELLULAR LOCATION</scope>
    <scope>PHOSPHORYLATION</scope>
    <scope>HYDROXYLATION</scope>
    <scope>MUTAGENESIS OF SER-15; PRO-16; THR-26; PRO-27; THR-28; PRO-29; SER-87; PRO-88; SER-155; PRO-156; SER-201; PRO-202; THR-358; PRO-359; THR-424; PRO-425; THR-444; PRO-445; SER-448 AND PRO-449</scope>
</reference>
<reference key="6">
    <citation type="journal article" date="2012" name="J. Cell Biol.">
        <title>RAB-6.2 and the retromer regulate glutamate receptor recycling through a retrograde pathway.</title>
        <authorList>
            <person name="Zhang D."/>
            <person name="Isack N.R."/>
            <person name="Glodowski D.R."/>
            <person name="Liu J."/>
            <person name="Chen C.C."/>
            <person name="Xu X.Z."/>
            <person name="Grant B.D."/>
            <person name="Rongo C."/>
        </authorList>
    </citation>
    <scope>FUNCTION</scope>
    <scope>INTERACTION WITH RAB-6.2</scope>
    <scope>SUBCELLULAR LOCATION</scope>
</reference>
<dbReference type="EMBL" id="AJ133374">
    <property type="protein sequence ID" value="CAB40208.1"/>
    <property type="molecule type" value="mRNA"/>
</dbReference>
<dbReference type="EMBL" id="BX284601">
    <property type="protein sequence ID" value="CAB03869.1"/>
    <property type="molecule type" value="Genomic_DNA"/>
</dbReference>
<dbReference type="EMBL" id="BX284601">
    <property type="protein sequence ID" value="CAC42256.1"/>
    <property type="molecule type" value="Genomic_DNA"/>
</dbReference>
<dbReference type="PIR" id="T19171">
    <property type="entry name" value="T19171"/>
</dbReference>
<dbReference type="RefSeq" id="NP_001020996.1">
    <molecule id="O17583-2"/>
    <property type="nucleotide sequence ID" value="NM_001025825.5"/>
</dbReference>
<dbReference type="RefSeq" id="NP_492226.2">
    <molecule id="O17583-1"/>
    <property type="nucleotide sequence ID" value="NM_059825.8"/>
</dbReference>
<dbReference type="SMR" id="O17583"/>
<dbReference type="BioGRID" id="38031">
    <property type="interactions" value="79"/>
</dbReference>
<dbReference type="ComplexPortal" id="CPX-2604">
    <property type="entry name" value="LIN-10-LIN-2-LIN-7 complex"/>
</dbReference>
<dbReference type="DIP" id="DIP-24889N"/>
<dbReference type="FunCoup" id="O17583">
    <property type="interactions" value="91"/>
</dbReference>
<dbReference type="IntAct" id="O17583">
    <property type="interactions" value="65"/>
</dbReference>
<dbReference type="MINT" id="O17583"/>
<dbReference type="STRING" id="6239.C09H6.2a.1"/>
<dbReference type="iPTMnet" id="O17583"/>
<dbReference type="PaxDb" id="6239-C09H6.2a"/>
<dbReference type="PeptideAtlas" id="O17583"/>
<dbReference type="EnsemblMetazoa" id="C09H6.2a.1">
    <molecule id="O17583-1"/>
    <property type="protein sequence ID" value="C09H6.2a.1"/>
    <property type="gene ID" value="WBGene00002999"/>
</dbReference>
<dbReference type="EnsemblMetazoa" id="C09H6.2b.1">
    <molecule id="O17583-2"/>
    <property type="protein sequence ID" value="C09H6.2b.1"/>
    <property type="gene ID" value="WBGene00002999"/>
</dbReference>
<dbReference type="GeneID" id="172597"/>
<dbReference type="KEGG" id="cel:CELE_C09H6.2"/>
<dbReference type="UCSC" id="C09H6.2b">
    <molecule id="O17583-1"/>
    <property type="organism name" value="c. elegans"/>
</dbReference>
<dbReference type="AGR" id="WB:WBGene00002999"/>
<dbReference type="CTD" id="172597"/>
<dbReference type="WormBase" id="C09H6.2a">
    <molecule id="O17583-1"/>
    <property type="protein sequence ID" value="CE15610"/>
    <property type="gene ID" value="WBGene00002999"/>
    <property type="gene designation" value="lin-10"/>
</dbReference>
<dbReference type="WormBase" id="C09H6.2b">
    <molecule id="O17583-2"/>
    <property type="protein sequence ID" value="CE27060"/>
    <property type="gene ID" value="WBGene00002999"/>
    <property type="gene designation" value="lin-10"/>
</dbReference>
<dbReference type="eggNOG" id="KOG3605">
    <property type="taxonomic scope" value="Eukaryota"/>
</dbReference>
<dbReference type="GeneTree" id="ENSGT00940000171779"/>
<dbReference type="InParanoid" id="O17583"/>
<dbReference type="OMA" id="EVMHHYF"/>
<dbReference type="OrthoDB" id="5987010at2759"/>
<dbReference type="Reactome" id="R-CEL-212676">
    <property type="pathway name" value="Dopamine Neurotransmitter Release Cycle"/>
</dbReference>
<dbReference type="SignaLink" id="O17583"/>
<dbReference type="PRO" id="PR:O17583"/>
<dbReference type="Proteomes" id="UP000001940">
    <property type="component" value="Chromosome I"/>
</dbReference>
<dbReference type="Bgee" id="WBGene00002999">
    <property type="expression patterns" value="Expressed in pharyngeal muscle cell (C elegans) and 4 other cell types or tissues"/>
</dbReference>
<dbReference type="ExpressionAtlas" id="O17583">
    <property type="expression patterns" value="baseline and differential"/>
</dbReference>
<dbReference type="GO" id="GO:0005737">
    <property type="term" value="C:cytoplasm"/>
    <property type="evidence" value="ECO:0000314"/>
    <property type="project" value="WormBase"/>
</dbReference>
<dbReference type="GO" id="GO:0030425">
    <property type="term" value="C:dendrite"/>
    <property type="evidence" value="ECO:0000314"/>
    <property type="project" value="WormBase"/>
</dbReference>
<dbReference type="GO" id="GO:0043197">
    <property type="term" value="C:dendritic spine"/>
    <property type="evidence" value="ECO:0000318"/>
    <property type="project" value="GO_Central"/>
</dbReference>
<dbReference type="GO" id="GO:0005794">
    <property type="term" value="C:Golgi apparatus"/>
    <property type="evidence" value="ECO:0000314"/>
    <property type="project" value="WormBase"/>
</dbReference>
<dbReference type="GO" id="GO:0032580">
    <property type="term" value="C:Golgi cisterna membrane"/>
    <property type="evidence" value="ECO:0007669"/>
    <property type="project" value="UniProtKB-SubCell"/>
</dbReference>
<dbReference type="GO" id="GO:0000138">
    <property type="term" value="C:Golgi trans cisterna"/>
    <property type="evidence" value="ECO:0000314"/>
    <property type="project" value="WormBase"/>
</dbReference>
<dbReference type="GO" id="GO:0043005">
    <property type="term" value="C:neuron projection"/>
    <property type="evidence" value="ECO:0000314"/>
    <property type="project" value="WormBase"/>
</dbReference>
<dbReference type="GO" id="GO:0043025">
    <property type="term" value="C:neuronal cell body"/>
    <property type="evidence" value="ECO:0000314"/>
    <property type="project" value="WormBase"/>
</dbReference>
<dbReference type="GO" id="GO:0043204">
    <property type="term" value="C:perikaryon"/>
    <property type="evidence" value="ECO:0007669"/>
    <property type="project" value="UniProtKB-SubCell"/>
</dbReference>
<dbReference type="GO" id="GO:0005886">
    <property type="term" value="C:plasma membrane"/>
    <property type="evidence" value="ECO:0000314"/>
    <property type="project" value="WormBase"/>
</dbReference>
<dbReference type="GO" id="GO:0045202">
    <property type="term" value="C:synapse"/>
    <property type="evidence" value="ECO:0000314"/>
    <property type="project" value="WormBase"/>
</dbReference>
<dbReference type="GO" id="GO:0030140">
    <property type="term" value="C:trans-Golgi network transport vesicle"/>
    <property type="evidence" value="ECO:0000314"/>
    <property type="project" value="WormBase"/>
</dbReference>
<dbReference type="GO" id="GO:0031267">
    <property type="term" value="F:small GTPase binding"/>
    <property type="evidence" value="ECO:0000353"/>
    <property type="project" value="UniProtKB"/>
</dbReference>
<dbReference type="GO" id="GO:0007268">
    <property type="term" value="P:chemical synaptic transmission"/>
    <property type="evidence" value="ECO:0000318"/>
    <property type="project" value="GO_Central"/>
</dbReference>
<dbReference type="GO" id="GO:0007399">
    <property type="term" value="P:nervous system development"/>
    <property type="evidence" value="ECO:0007669"/>
    <property type="project" value="UniProtKB-KW"/>
</dbReference>
<dbReference type="GO" id="GO:0007270">
    <property type="term" value="P:neuron-neuron synaptic transmission"/>
    <property type="evidence" value="ECO:0000315"/>
    <property type="project" value="WormBase"/>
</dbReference>
<dbReference type="GO" id="GO:1905852">
    <property type="term" value="P:positive regulation of backward locomotion"/>
    <property type="evidence" value="ECO:0000315"/>
    <property type="project" value="UniProtKB"/>
</dbReference>
<dbReference type="GO" id="GO:0040026">
    <property type="term" value="P:positive regulation of vulval development"/>
    <property type="evidence" value="ECO:0000315"/>
    <property type="project" value="WormBase"/>
</dbReference>
<dbReference type="GO" id="GO:0008104">
    <property type="term" value="P:protein localization"/>
    <property type="evidence" value="ECO:0000314"/>
    <property type="project" value="WormBase"/>
</dbReference>
<dbReference type="GO" id="GO:1903361">
    <property type="term" value="P:protein localization to basolateral plasma membrane"/>
    <property type="evidence" value="ECO:0000314"/>
    <property type="project" value="WormBase"/>
</dbReference>
<dbReference type="GO" id="GO:1902946">
    <property type="term" value="P:protein localization to early endosome"/>
    <property type="evidence" value="ECO:0000315"/>
    <property type="project" value="UniProtKB"/>
</dbReference>
<dbReference type="GO" id="GO:0097120">
    <property type="term" value="P:receptor localization to synapse"/>
    <property type="evidence" value="ECO:0000315"/>
    <property type="project" value="WormBase"/>
</dbReference>
<dbReference type="GO" id="GO:0043058">
    <property type="term" value="P:regulation of backward locomotion"/>
    <property type="evidence" value="ECO:0000316"/>
    <property type="project" value="UniProtKB"/>
</dbReference>
<dbReference type="GO" id="GO:0009612">
    <property type="term" value="P:response to mechanical stimulus"/>
    <property type="evidence" value="ECO:0000315"/>
    <property type="project" value="UniProtKB"/>
</dbReference>
<dbReference type="GO" id="GO:0050975">
    <property type="term" value="P:sensory perception of touch"/>
    <property type="evidence" value="ECO:0000315"/>
    <property type="project" value="WormBase"/>
</dbReference>
<dbReference type="CDD" id="cd06720">
    <property type="entry name" value="PDZ1_APBA1_3-like"/>
    <property type="match status" value="1"/>
</dbReference>
<dbReference type="CDD" id="cd06793">
    <property type="entry name" value="PDZ2_APBA1_3-like"/>
    <property type="match status" value="1"/>
</dbReference>
<dbReference type="CDD" id="cd01208">
    <property type="entry name" value="PTB_X11"/>
    <property type="match status" value="1"/>
</dbReference>
<dbReference type="FunFam" id="2.30.42.10:FF:000007">
    <property type="entry name" value="Amyloid beta A4 protein-binding family A member"/>
    <property type="match status" value="1"/>
</dbReference>
<dbReference type="FunFam" id="2.30.29.30:FF:000207">
    <property type="entry name" value="Protein CBR-LIN-10, isoform a"/>
    <property type="match status" value="1"/>
</dbReference>
<dbReference type="Gene3D" id="2.30.42.10">
    <property type="match status" value="2"/>
</dbReference>
<dbReference type="Gene3D" id="2.30.29.30">
    <property type="entry name" value="Pleckstrin-homology domain (PH domain)/Phosphotyrosine-binding domain (PTB)"/>
    <property type="match status" value="1"/>
</dbReference>
<dbReference type="InterPro" id="IPR051230">
    <property type="entry name" value="APP-Binding"/>
</dbReference>
<dbReference type="InterPro" id="IPR001478">
    <property type="entry name" value="PDZ"/>
</dbReference>
<dbReference type="InterPro" id="IPR036034">
    <property type="entry name" value="PDZ_sf"/>
</dbReference>
<dbReference type="InterPro" id="IPR011993">
    <property type="entry name" value="PH-like_dom_sf"/>
</dbReference>
<dbReference type="InterPro" id="IPR006020">
    <property type="entry name" value="PTB/PI_dom"/>
</dbReference>
<dbReference type="PANTHER" id="PTHR12345">
    <property type="entry name" value="SYNTENIN RELATED"/>
    <property type="match status" value="1"/>
</dbReference>
<dbReference type="PANTHER" id="PTHR12345:SF16">
    <property type="entry name" value="X11L, ISOFORM F-RELATED"/>
    <property type="match status" value="1"/>
</dbReference>
<dbReference type="Pfam" id="PF00595">
    <property type="entry name" value="PDZ"/>
    <property type="match status" value="2"/>
</dbReference>
<dbReference type="Pfam" id="PF00640">
    <property type="entry name" value="PID"/>
    <property type="match status" value="1"/>
</dbReference>
<dbReference type="SMART" id="SM00228">
    <property type="entry name" value="PDZ"/>
    <property type="match status" value="2"/>
</dbReference>
<dbReference type="SMART" id="SM00462">
    <property type="entry name" value="PTB"/>
    <property type="match status" value="1"/>
</dbReference>
<dbReference type="SUPFAM" id="SSF50156">
    <property type="entry name" value="PDZ domain-like"/>
    <property type="match status" value="2"/>
</dbReference>
<dbReference type="SUPFAM" id="SSF50729">
    <property type="entry name" value="PH domain-like"/>
    <property type="match status" value="1"/>
</dbReference>
<dbReference type="PROSITE" id="PS50106">
    <property type="entry name" value="PDZ"/>
    <property type="match status" value="2"/>
</dbReference>
<dbReference type="PROSITE" id="PS01179">
    <property type="entry name" value="PID"/>
    <property type="match status" value="1"/>
</dbReference>
<accession>O17583</accession>
<accession>Q9XZQ5</accession>
<gene>
    <name evidence="10" type="primary">lin-10</name>
    <name evidence="10" type="ORF">C09H6.2</name>
</gene>
<protein>
    <recommendedName>
        <fullName>Protein lin-10</fullName>
    </recommendedName>
    <alternativeName>
        <fullName>Abnormal cell lineage protein 10</fullName>
    </alternativeName>
</protein>
<sequence>MSSEAVAQATAATTSPEHGVPTSSATPTPPPSKGGGAGGGGGGEQQQVPFQMIPPGHFFANPFLNPYIPTAGAPAQEGEAQPQMVFSPAQYQEVMHHYFQQMMAASGAQFPIPFPMQFQPALQQPRPSSQASSSHRSEDDNGRQTAGSVVSSNVSPNHREVRPAEDSTETSGVVQNNDELLVPTSTSSDVTIGDVIEKSDSPENSQESAGGEEKSEEKRKLSGDRTDSLIRKQMSEMEKEITRRSQNKNIKTIDDDGLAELIGGSSTRTVADDFSPFVDKSGLSYTAPAPPSTEKSAPKESLNQLRSSFNLPDDSTTVGPVGPSTVPQQSQQFANNSMFMANAGNFVQNAFPIGVTMTPQATFGAAPGFQMMQPHQHNLFMQQPNPTFVNNGTNPFLQTQATLPNFVQNGTAPLVPTVSAQQFTPEQLAAAFAQQQIAQSAAPTPFDSPPPSMPSTSSGPSGALAPPPPPSHPIPRRVSGNGWPEENKENGTSTSTTNGAQSVPAAAGTDDPVWVLRDSYLKKMQREQRTSEEEEMSWQEAATAAQEAAENGGGDDQEEQETDRLLNGGTTGASTKGAERRGSVDKKKNSKETMVHEPAVLIEGVLFRARYLGSTQMLCESRGSKAARMAQAQEAVARVKAPEGDVQPSTEIDLFISTEKIMVLNTDLQRISDTDVRQDILMDHALRTISYIADIGDLVVLMARRMSTSHSDESCSDGDSSGGGVRKTPKVICHVFESDEASFIAQSIGQAFQVAYVEFLRANGIDDPSYLRQIDYQEVLNSQELLGDELEMFAKKETQKEVVVPKKAGEPLGIVVVESGWGSMLPTVVLAHMNPVGPAAHSNKLNIGDQIININGISLVGLPLSAAQTQIKNMKTATAVRMTVVSTPPVVEVRIRRPDTKYQLGFSVQNGVICSLLRGGIAERGGIRVGHRIIEINGTSVVAVAHDRIVNMLATAVGEIHMKTMPTSMFRLLTGQEQPQYI</sequence>
<comment type="function">
    <text evidence="4 5 6 7 8">Required specifically for the determination of 3 vulval precursor cell fates P5.p, P6.p and P7.p during late second and early third larval stages; required for basolateral localization of receptor tyrosine kinase let-23. Could have a general but redundant role in development, functioning in diverse cell lineages to control cell fates (PubMed:10359617, PubMed:2159938). Regulates the trafficking of the glr-1 subunit of AMPA-type glutamate receptors (AMPRs) in the ventral nerve cord (PubMed:17671168, PubMed:22213799, PubMed:22252129). This may be partly through interacting with the small GTPase rab-6.2 in its active GTP-bound state (PubMed:22213799).</text>
</comment>
<comment type="subunit">
    <text evidence="7 8">Interacts (via N-terminus) with egl-9 isoform e (via catalytic domain); the interaction regulates its trafficking; the interaction is direct (PubMed:22252129). Interacts with rab-6.2 (in GTP-bound form) (PubMed:22213799).</text>
</comment>
<comment type="interaction">
    <interactant intactId="EBI-313389">
        <id>O17583</id>
    </interactant>
    <interactant intactId="EBI-2913838">
        <id>Q19955</id>
        <label>ags-3</label>
    </interactant>
    <organismsDiffer>false</organismsDiffer>
    <experiments>2</experiments>
</comment>
<comment type="interaction">
    <interactant intactId="EBI-313389">
        <id>O17583</id>
    </interactant>
    <interactant intactId="EBI-312947">
        <id>O01427</id>
        <label>air-2</label>
    </interactant>
    <organismsDiffer>false</organismsDiffer>
    <experiments>2</experiments>
</comment>
<comment type="interaction">
    <interactant intactId="EBI-313389">
        <id>O17583</id>
    </interactant>
    <interactant intactId="EBI-328477">
        <id>O45952</id>
        <label>csc-1</label>
    </interactant>
    <organismsDiffer>false</organismsDiffer>
    <experiments>2</experiments>
</comment>
<comment type="interaction">
    <interactant intactId="EBI-313389">
        <id>O17583</id>
    </interactant>
    <interactant intactId="EBI-315019">
        <id>P54936</id>
        <label>lin-2</label>
    </interactant>
    <organismsDiffer>false</organismsDiffer>
    <experiments>5</experiments>
</comment>
<comment type="interaction">
    <interactant intactId="EBI-313389">
        <id>O17583</id>
    </interactant>
    <interactant intactId="EBI-325337">
        <id>G5EC32</id>
        <label>sorb-1</label>
    </interactant>
    <organismsDiffer>false</organismsDiffer>
    <experiments>6</experiments>
</comment>
<comment type="subcellular location">
    <subcellularLocation>
        <location evidence="4">Golgi apparatus</location>
        <location evidence="4">Golgi stack membrane</location>
        <topology evidence="4">Peripheral membrane protein</topology>
    </subcellularLocation>
    <subcellularLocation>
        <location evidence="4">Golgi apparatus</location>
        <location evidence="4">trans-Golgi network membrane</location>
        <topology evidence="4">Peripheral membrane protein</topology>
    </subcellularLocation>
    <subcellularLocation>
        <location evidence="8">Cytoplasm</location>
    </subcellularLocation>
    <subcellularLocation>
        <location evidence="5">Synapse</location>
    </subcellularLocation>
    <subcellularLocation>
        <location evidence="7">Perikaryon</location>
    </subcellularLocation>
    <text evidence="4 5 7 8">In trans cisternae of Golgi or trans-Golgi network (PubMed:10359617). Localizes to Golgi-associated structures (PubMed:22213799). Partially co-localizes with glr-1 at the synapse (PubMed:17671168). Localizes in endosome-like structures in ventral cord dendrites. During hypoxia, diffused cytoplasmic localization. Localization in the ventral nerve cord is regulated by egl-9 isoform e and cdk-5 (PubMed:22252129). Co-localizes with rab-6.2 in neuronal cell bodies (PubMed:22213799). Co-localizes with rme-8 in puntate structures in neuronal cell bodies and in the intestine (PubMed:22213799).</text>
</comment>
<comment type="alternative products">
    <event type="alternative splicing"/>
    <isoform>
        <id>O17583-1</id>
        <name evidence="10">a</name>
        <sequence type="displayed"/>
    </isoform>
    <isoform>
        <id>O17583-2</id>
        <name evidence="11">b</name>
        <sequence type="described" ref="VSP_004305"/>
    </isoform>
</comment>
<comment type="tissue specificity">
    <text evidence="4">Expressed in vulval epithelial cells and neurons.</text>
</comment>
<comment type="developmental stage">
    <text>Expressed throughout development.</text>
</comment>
<comment type="domain">
    <text>PDZ protein interaction domains may not be essential for function in vulval induction.</text>
</comment>
<comment type="PTM">
    <text evidence="5 8">Phosphorylated on multiple Ser and Thr residues by cdk-5 which regulates its localization (PubMed:17671168, PubMed:22252129).</text>
</comment>
<comment type="PTM">
    <text evidence="8">May be hydroxylated by egl-9 isoform e on multiple Pro residues which may prevent phosphorylation by cdk-5.</text>
</comment>
<name>LIN10_CAEEL</name>
<organism>
    <name type="scientific">Caenorhabditis elegans</name>
    <dbReference type="NCBI Taxonomy" id="6239"/>
    <lineage>
        <taxon>Eukaryota</taxon>
        <taxon>Metazoa</taxon>
        <taxon>Ecdysozoa</taxon>
        <taxon>Nematoda</taxon>
        <taxon>Chromadorea</taxon>
        <taxon>Rhabditida</taxon>
        <taxon>Rhabditina</taxon>
        <taxon>Rhabditomorpha</taxon>
        <taxon>Rhabditoidea</taxon>
        <taxon>Rhabditidae</taxon>
        <taxon>Peloderinae</taxon>
        <taxon>Caenorhabditis</taxon>
    </lineage>
</organism>